<protein>
    <recommendedName>
        <fullName evidence="1">Holliday junction branch migration complex subunit RuvA</fullName>
    </recommendedName>
</protein>
<sequence>MIGRITGTLIEKSPPVVCVDVNGVGYEIDVPMSTLYALPETGARVTLFTHLVVREDAQLLYGFGSSAERSTFRELIKVTGIGARTALAVLSGLSVAELSQAITLQETGRLTRVPGIGKKTAERLLLEMRGKLGADIGATPHAAGGHQSDILNALLALGYSDKESQAALKKLPEGVDVSEGIRLALKALVR</sequence>
<keyword id="KW-0963">Cytoplasm</keyword>
<keyword id="KW-0227">DNA damage</keyword>
<keyword id="KW-0233">DNA recombination</keyword>
<keyword id="KW-0234">DNA repair</keyword>
<keyword id="KW-0238">DNA-binding</keyword>
<name>RUVA_BORPA</name>
<feature type="chain" id="PRO_0000094607" description="Holliday junction branch migration complex subunit RuvA">
    <location>
        <begin position="1"/>
        <end position="190"/>
    </location>
</feature>
<feature type="region of interest" description="Domain I" evidence="1">
    <location>
        <begin position="1"/>
        <end position="64"/>
    </location>
</feature>
<feature type="region of interest" description="Domain II" evidence="1">
    <location>
        <begin position="65"/>
        <end position="137"/>
    </location>
</feature>
<feature type="region of interest" description="Flexible linker" evidence="1">
    <location>
        <begin position="137"/>
        <end position="141"/>
    </location>
</feature>
<feature type="region of interest" description="Domain III" evidence="1">
    <location>
        <begin position="142"/>
        <end position="190"/>
    </location>
</feature>
<evidence type="ECO:0000255" key="1">
    <source>
        <dbReference type="HAMAP-Rule" id="MF_00031"/>
    </source>
</evidence>
<organism>
    <name type="scientific">Bordetella parapertussis (strain 12822 / ATCC BAA-587 / NCTC 13253)</name>
    <dbReference type="NCBI Taxonomy" id="257311"/>
    <lineage>
        <taxon>Bacteria</taxon>
        <taxon>Pseudomonadati</taxon>
        <taxon>Pseudomonadota</taxon>
        <taxon>Betaproteobacteria</taxon>
        <taxon>Burkholderiales</taxon>
        <taxon>Alcaligenaceae</taxon>
        <taxon>Bordetella</taxon>
    </lineage>
</organism>
<accession>Q7W4T9</accession>
<dbReference type="EMBL" id="BX640434">
    <property type="protein sequence ID" value="CAE38852.1"/>
    <property type="molecule type" value="Genomic_DNA"/>
</dbReference>
<dbReference type="RefSeq" id="WP_010929129.1">
    <property type="nucleotide sequence ID" value="NC_002928.3"/>
</dbReference>
<dbReference type="SMR" id="Q7W4T9"/>
<dbReference type="GeneID" id="93205357"/>
<dbReference type="KEGG" id="bpa:BPP3568"/>
<dbReference type="HOGENOM" id="CLU_087936_0_0_4"/>
<dbReference type="Proteomes" id="UP000001421">
    <property type="component" value="Chromosome"/>
</dbReference>
<dbReference type="GO" id="GO:0005737">
    <property type="term" value="C:cytoplasm"/>
    <property type="evidence" value="ECO:0007669"/>
    <property type="project" value="UniProtKB-SubCell"/>
</dbReference>
<dbReference type="GO" id="GO:0009379">
    <property type="term" value="C:Holliday junction helicase complex"/>
    <property type="evidence" value="ECO:0007669"/>
    <property type="project" value="InterPro"/>
</dbReference>
<dbReference type="GO" id="GO:0048476">
    <property type="term" value="C:Holliday junction resolvase complex"/>
    <property type="evidence" value="ECO:0007669"/>
    <property type="project" value="UniProtKB-UniRule"/>
</dbReference>
<dbReference type="GO" id="GO:0005524">
    <property type="term" value="F:ATP binding"/>
    <property type="evidence" value="ECO:0007669"/>
    <property type="project" value="InterPro"/>
</dbReference>
<dbReference type="GO" id="GO:0000400">
    <property type="term" value="F:four-way junction DNA binding"/>
    <property type="evidence" value="ECO:0007669"/>
    <property type="project" value="UniProtKB-UniRule"/>
</dbReference>
<dbReference type="GO" id="GO:0009378">
    <property type="term" value="F:four-way junction helicase activity"/>
    <property type="evidence" value="ECO:0007669"/>
    <property type="project" value="InterPro"/>
</dbReference>
<dbReference type="GO" id="GO:0006310">
    <property type="term" value="P:DNA recombination"/>
    <property type="evidence" value="ECO:0007669"/>
    <property type="project" value="UniProtKB-UniRule"/>
</dbReference>
<dbReference type="GO" id="GO:0006281">
    <property type="term" value="P:DNA repair"/>
    <property type="evidence" value="ECO:0007669"/>
    <property type="project" value="UniProtKB-UniRule"/>
</dbReference>
<dbReference type="CDD" id="cd14332">
    <property type="entry name" value="UBA_RuvA_C"/>
    <property type="match status" value="1"/>
</dbReference>
<dbReference type="Gene3D" id="1.10.150.20">
    <property type="entry name" value="5' to 3' exonuclease, C-terminal subdomain"/>
    <property type="match status" value="1"/>
</dbReference>
<dbReference type="Gene3D" id="1.10.8.10">
    <property type="entry name" value="DNA helicase RuvA subunit, C-terminal domain"/>
    <property type="match status" value="1"/>
</dbReference>
<dbReference type="Gene3D" id="2.40.50.140">
    <property type="entry name" value="Nucleic acid-binding proteins"/>
    <property type="match status" value="1"/>
</dbReference>
<dbReference type="HAMAP" id="MF_00031">
    <property type="entry name" value="DNA_HJ_migration_RuvA"/>
    <property type="match status" value="1"/>
</dbReference>
<dbReference type="InterPro" id="IPR013849">
    <property type="entry name" value="DNA_helicase_Holl-junc_RuvA_I"/>
</dbReference>
<dbReference type="InterPro" id="IPR003583">
    <property type="entry name" value="Hlx-hairpin-Hlx_DNA-bd_motif"/>
</dbReference>
<dbReference type="InterPro" id="IPR012340">
    <property type="entry name" value="NA-bd_OB-fold"/>
</dbReference>
<dbReference type="InterPro" id="IPR000085">
    <property type="entry name" value="RuvA"/>
</dbReference>
<dbReference type="InterPro" id="IPR010994">
    <property type="entry name" value="RuvA_2-like"/>
</dbReference>
<dbReference type="InterPro" id="IPR011114">
    <property type="entry name" value="RuvA_C"/>
</dbReference>
<dbReference type="InterPro" id="IPR036267">
    <property type="entry name" value="RuvA_C_sf"/>
</dbReference>
<dbReference type="NCBIfam" id="TIGR00084">
    <property type="entry name" value="ruvA"/>
    <property type="match status" value="1"/>
</dbReference>
<dbReference type="Pfam" id="PF14520">
    <property type="entry name" value="HHH_5"/>
    <property type="match status" value="1"/>
</dbReference>
<dbReference type="Pfam" id="PF07499">
    <property type="entry name" value="RuvA_C"/>
    <property type="match status" value="1"/>
</dbReference>
<dbReference type="Pfam" id="PF01330">
    <property type="entry name" value="RuvA_N"/>
    <property type="match status" value="1"/>
</dbReference>
<dbReference type="SMART" id="SM00278">
    <property type="entry name" value="HhH1"/>
    <property type="match status" value="2"/>
</dbReference>
<dbReference type="SUPFAM" id="SSF46929">
    <property type="entry name" value="DNA helicase RuvA subunit, C-terminal domain"/>
    <property type="match status" value="1"/>
</dbReference>
<dbReference type="SUPFAM" id="SSF50249">
    <property type="entry name" value="Nucleic acid-binding proteins"/>
    <property type="match status" value="1"/>
</dbReference>
<dbReference type="SUPFAM" id="SSF47781">
    <property type="entry name" value="RuvA domain 2-like"/>
    <property type="match status" value="1"/>
</dbReference>
<gene>
    <name evidence="1" type="primary">ruvA</name>
    <name type="ordered locus">BPP3568</name>
</gene>
<reference key="1">
    <citation type="journal article" date="2003" name="Nat. Genet.">
        <title>Comparative analysis of the genome sequences of Bordetella pertussis, Bordetella parapertussis and Bordetella bronchiseptica.</title>
        <authorList>
            <person name="Parkhill J."/>
            <person name="Sebaihia M."/>
            <person name="Preston A."/>
            <person name="Murphy L.D."/>
            <person name="Thomson N.R."/>
            <person name="Harris D.E."/>
            <person name="Holden M.T.G."/>
            <person name="Churcher C.M."/>
            <person name="Bentley S.D."/>
            <person name="Mungall K.L."/>
            <person name="Cerdeno-Tarraga A.-M."/>
            <person name="Temple L."/>
            <person name="James K.D."/>
            <person name="Harris B."/>
            <person name="Quail M.A."/>
            <person name="Achtman M."/>
            <person name="Atkin R."/>
            <person name="Baker S."/>
            <person name="Basham D."/>
            <person name="Bason N."/>
            <person name="Cherevach I."/>
            <person name="Chillingworth T."/>
            <person name="Collins M."/>
            <person name="Cronin A."/>
            <person name="Davis P."/>
            <person name="Doggett J."/>
            <person name="Feltwell T."/>
            <person name="Goble A."/>
            <person name="Hamlin N."/>
            <person name="Hauser H."/>
            <person name="Holroyd S."/>
            <person name="Jagels K."/>
            <person name="Leather S."/>
            <person name="Moule S."/>
            <person name="Norberczak H."/>
            <person name="O'Neil S."/>
            <person name="Ormond D."/>
            <person name="Price C."/>
            <person name="Rabbinowitsch E."/>
            <person name="Rutter S."/>
            <person name="Sanders M."/>
            <person name="Saunders D."/>
            <person name="Seeger K."/>
            <person name="Sharp S."/>
            <person name="Simmonds M."/>
            <person name="Skelton J."/>
            <person name="Squares R."/>
            <person name="Squares S."/>
            <person name="Stevens K."/>
            <person name="Unwin L."/>
            <person name="Whitehead S."/>
            <person name="Barrell B.G."/>
            <person name="Maskell D.J."/>
        </authorList>
    </citation>
    <scope>NUCLEOTIDE SEQUENCE [LARGE SCALE GENOMIC DNA]</scope>
    <source>
        <strain>12822 / ATCC BAA-587 / NCTC 13253</strain>
    </source>
</reference>
<comment type="function">
    <text evidence="1">The RuvA-RuvB-RuvC complex processes Holliday junction (HJ) DNA during genetic recombination and DNA repair, while the RuvA-RuvB complex plays an important role in the rescue of blocked DNA replication forks via replication fork reversal (RFR). RuvA specifically binds to HJ cruciform DNA, conferring on it an open structure. The RuvB hexamer acts as an ATP-dependent pump, pulling dsDNA into and through the RuvAB complex. HJ branch migration allows RuvC to scan DNA until it finds its consensus sequence, where it cleaves and resolves the cruciform DNA.</text>
</comment>
<comment type="subunit">
    <text evidence="1">Homotetramer. Forms an RuvA(8)-RuvB(12)-Holliday junction (HJ) complex. HJ DNA is sandwiched between 2 RuvA tetramers; dsDNA enters through RuvA and exits via RuvB. An RuvB hexamer assembles on each DNA strand where it exits the tetramer. Each RuvB hexamer is contacted by two RuvA subunits (via domain III) on 2 adjacent RuvB subunits; this complex drives branch migration. In the full resolvosome a probable DNA-RuvA(4)-RuvB(12)-RuvC(2) complex forms which resolves the HJ.</text>
</comment>
<comment type="subcellular location">
    <subcellularLocation>
        <location evidence="1">Cytoplasm</location>
    </subcellularLocation>
</comment>
<comment type="domain">
    <text evidence="1">Has three domains with a flexible linker between the domains II and III and assumes an 'L' shape. Domain III is highly mobile and contacts RuvB.</text>
</comment>
<comment type="similarity">
    <text evidence="1">Belongs to the RuvA family.</text>
</comment>
<proteinExistence type="inferred from homology"/>